<name>SURE_DESHY</name>
<gene>
    <name evidence="1" type="primary">surE</name>
    <name type="ordered locus">DSY1823</name>
</gene>
<accession>Q24WI0</accession>
<feature type="chain" id="PRO_1000007724" description="5'-nucleotidase SurE">
    <location>
        <begin position="1"/>
        <end position="251"/>
    </location>
</feature>
<feature type="binding site" evidence="1">
    <location>
        <position position="8"/>
    </location>
    <ligand>
        <name>a divalent metal cation</name>
        <dbReference type="ChEBI" id="CHEBI:60240"/>
    </ligand>
</feature>
<feature type="binding site" evidence="1">
    <location>
        <position position="9"/>
    </location>
    <ligand>
        <name>a divalent metal cation</name>
        <dbReference type="ChEBI" id="CHEBI:60240"/>
    </ligand>
</feature>
<feature type="binding site" evidence="1">
    <location>
        <position position="40"/>
    </location>
    <ligand>
        <name>a divalent metal cation</name>
        <dbReference type="ChEBI" id="CHEBI:60240"/>
    </ligand>
</feature>
<feature type="binding site" evidence="1">
    <location>
        <position position="95"/>
    </location>
    <ligand>
        <name>a divalent metal cation</name>
        <dbReference type="ChEBI" id="CHEBI:60240"/>
    </ligand>
</feature>
<dbReference type="EC" id="3.1.3.5" evidence="1"/>
<dbReference type="EMBL" id="AP008230">
    <property type="protein sequence ID" value="BAE83612.1"/>
    <property type="molecule type" value="Genomic_DNA"/>
</dbReference>
<dbReference type="RefSeq" id="WP_005812070.1">
    <property type="nucleotide sequence ID" value="NC_007907.1"/>
</dbReference>
<dbReference type="SMR" id="Q24WI0"/>
<dbReference type="STRING" id="138119.DSY1823"/>
<dbReference type="KEGG" id="dsy:DSY1823"/>
<dbReference type="eggNOG" id="COG0496">
    <property type="taxonomic scope" value="Bacteria"/>
</dbReference>
<dbReference type="HOGENOM" id="CLU_045192_1_3_9"/>
<dbReference type="Proteomes" id="UP000001946">
    <property type="component" value="Chromosome"/>
</dbReference>
<dbReference type="GO" id="GO:0005737">
    <property type="term" value="C:cytoplasm"/>
    <property type="evidence" value="ECO:0007669"/>
    <property type="project" value="UniProtKB-SubCell"/>
</dbReference>
<dbReference type="GO" id="GO:0008254">
    <property type="term" value="F:3'-nucleotidase activity"/>
    <property type="evidence" value="ECO:0007669"/>
    <property type="project" value="TreeGrafter"/>
</dbReference>
<dbReference type="GO" id="GO:0008253">
    <property type="term" value="F:5'-nucleotidase activity"/>
    <property type="evidence" value="ECO:0007669"/>
    <property type="project" value="UniProtKB-UniRule"/>
</dbReference>
<dbReference type="GO" id="GO:0004309">
    <property type="term" value="F:exopolyphosphatase activity"/>
    <property type="evidence" value="ECO:0007669"/>
    <property type="project" value="TreeGrafter"/>
</dbReference>
<dbReference type="GO" id="GO:0046872">
    <property type="term" value="F:metal ion binding"/>
    <property type="evidence" value="ECO:0007669"/>
    <property type="project" value="UniProtKB-UniRule"/>
</dbReference>
<dbReference type="GO" id="GO:0000166">
    <property type="term" value="F:nucleotide binding"/>
    <property type="evidence" value="ECO:0007669"/>
    <property type="project" value="UniProtKB-KW"/>
</dbReference>
<dbReference type="FunFam" id="3.40.1210.10:FF:000001">
    <property type="entry name" value="5'/3'-nucleotidase SurE"/>
    <property type="match status" value="1"/>
</dbReference>
<dbReference type="Gene3D" id="3.40.1210.10">
    <property type="entry name" value="Survival protein SurE-like phosphatase/nucleotidase"/>
    <property type="match status" value="1"/>
</dbReference>
<dbReference type="HAMAP" id="MF_00060">
    <property type="entry name" value="SurE"/>
    <property type="match status" value="1"/>
</dbReference>
<dbReference type="InterPro" id="IPR030048">
    <property type="entry name" value="SurE"/>
</dbReference>
<dbReference type="InterPro" id="IPR002828">
    <property type="entry name" value="SurE-like_Pase/nucleotidase"/>
</dbReference>
<dbReference type="InterPro" id="IPR036523">
    <property type="entry name" value="SurE-like_sf"/>
</dbReference>
<dbReference type="NCBIfam" id="NF001490">
    <property type="entry name" value="PRK00346.1-4"/>
    <property type="match status" value="1"/>
</dbReference>
<dbReference type="NCBIfam" id="NF001492">
    <property type="entry name" value="PRK00346.2-2"/>
    <property type="match status" value="1"/>
</dbReference>
<dbReference type="NCBIfam" id="TIGR00087">
    <property type="entry name" value="surE"/>
    <property type="match status" value="1"/>
</dbReference>
<dbReference type="PANTHER" id="PTHR30457">
    <property type="entry name" value="5'-NUCLEOTIDASE SURE"/>
    <property type="match status" value="1"/>
</dbReference>
<dbReference type="PANTHER" id="PTHR30457:SF12">
    <property type="entry name" value="5'_3'-NUCLEOTIDASE SURE"/>
    <property type="match status" value="1"/>
</dbReference>
<dbReference type="Pfam" id="PF01975">
    <property type="entry name" value="SurE"/>
    <property type="match status" value="1"/>
</dbReference>
<dbReference type="SUPFAM" id="SSF64167">
    <property type="entry name" value="SurE-like"/>
    <property type="match status" value="1"/>
</dbReference>
<protein>
    <recommendedName>
        <fullName evidence="1">5'-nucleotidase SurE</fullName>
        <ecNumber evidence="1">3.1.3.5</ecNumber>
    </recommendedName>
    <alternativeName>
        <fullName evidence="1">Nucleoside 5'-monophosphate phosphohydrolase</fullName>
    </alternativeName>
</protein>
<sequence>MHILLTNDDGYFAPGLQTLYTTLAEAGYDVFIVAPDSQKSATGHSITLFEPLFITKHSLDRGTGYAVSGKPADCVKLAIQGSIIPKPDLVISGINNGPNLGTDVFYSGTVSAAMEGVLLGVPAIAVSLASFSAVDYKPAAQFVALSLPKLRLGPGLININIPPLPEKEWKGVRVTKLGKAVYENVFEHRQAPYGRDYYWQAGTVSPEVDQETDLYAVQEGYVSITPMHSDLTDYIKLKELRQSLSLENPNK</sequence>
<evidence type="ECO:0000255" key="1">
    <source>
        <dbReference type="HAMAP-Rule" id="MF_00060"/>
    </source>
</evidence>
<proteinExistence type="inferred from homology"/>
<comment type="function">
    <text evidence="1">Nucleotidase that shows phosphatase activity on nucleoside 5'-monophosphates.</text>
</comment>
<comment type="catalytic activity">
    <reaction evidence="1">
        <text>a ribonucleoside 5'-phosphate + H2O = a ribonucleoside + phosphate</text>
        <dbReference type="Rhea" id="RHEA:12484"/>
        <dbReference type="ChEBI" id="CHEBI:15377"/>
        <dbReference type="ChEBI" id="CHEBI:18254"/>
        <dbReference type="ChEBI" id="CHEBI:43474"/>
        <dbReference type="ChEBI" id="CHEBI:58043"/>
        <dbReference type="EC" id="3.1.3.5"/>
    </reaction>
</comment>
<comment type="cofactor">
    <cofactor evidence="1">
        <name>a divalent metal cation</name>
        <dbReference type="ChEBI" id="CHEBI:60240"/>
    </cofactor>
    <text evidence="1">Binds 1 divalent metal cation per subunit.</text>
</comment>
<comment type="subcellular location">
    <subcellularLocation>
        <location evidence="1">Cytoplasm</location>
    </subcellularLocation>
</comment>
<comment type="similarity">
    <text evidence="1">Belongs to the SurE nucleotidase family.</text>
</comment>
<reference key="1">
    <citation type="journal article" date="2006" name="J. Bacteriol.">
        <title>Complete genome sequence of the dehalorespiring bacterium Desulfitobacterium hafniense Y51 and comparison with Dehalococcoides ethenogenes 195.</title>
        <authorList>
            <person name="Nonaka H."/>
            <person name="Keresztes G."/>
            <person name="Shinoda Y."/>
            <person name="Ikenaga Y."/>
            <person name="Abe M."/>
            <person name="Naito K."/>
            <person name="Inatomi K."/>
            <person name="Furukawa K."/>
            <person name="Inui M."/>
            <person name="Yukawa H."/>
        </authorList>
    </citation>
    <scope>NUCLEOTIDE SEQUENCE [LARGE SCALE GENOMIC DNA]</scope>
    <source>
        <strain>Y51</strain>
    </source>
</reference>
<keyword id="KW-0963">Cytoplasm</keyword>
<keyword id="KW-0378">Hydrolase</keyword>
<keyword id="KW-0479">Metal-binding</keyword>
<keyword id="KW-0547">Nucleotide-binding</keyword>
<keyword id="KW-1185">Reference proteome</keyword>
<organism>
    <name type="scientific">Desulfitobacterium hafniense (strain Y51)</name>
    <dbReference type="NCBI Taxonomy" id="138119"/>
    <lineage>
        <taxon>Bacteria</taxon>
        <taxon>Bacillati</taxon>
        <taxon>Bacillota</taxon>
        <taxon>Clostridia</taxon>
        <taxon>Eubacteriales</taxon>
        <taxon>Desulfitobacteriaceae</taxon>
        <taxon>Desulfitobacterium</taxon>
    </lineage>
</organism>